<proteinExistence type="evidence at protein level"/>
<reference key="1">
    <citation type="journal article" date="1984" name="Arch. Biochem. Biophys.">
        <title>The isoinhibitors of chymotrypsin/elastase from Ascaris lumbricoides: the primary structure.</title>
        <authorList>
            <person name="Babin D.R."/>
            <person name="Peanasky R.J."/>
            <person name="Goos S.M."/>
        </authorList>
    </citation>
    <scope>PROTEIN SEQUENCE</scope>
    <scope>SUBCELLULAR LOCATION</scope>
</reference>
<reference key="2">
    <citation type="journal article" date="1998" name="Exp. Parasitol.">
        <title>Anisakis simplex: mutational bursts in the reactive site centers of serine protease inhibitors from an ascarid nematode.</title>
        <authorList>
            <person name="Lu C.C."/>
            <person name="Nguyen T."/>
            <person name="Morris S."/>
            <person name="Hill D."/>
            <person name="Sakanari J.A."/>
        </authorList>
    </citation>
    <scope>NUCLEOTIDE SEQUENCE [MRNA]</scope>
</reference>
<reference key="3">
    <citation type="journal article" date="1994" name="Structure">
        <title>The molecular structure of the complex of Ascaris chymotrypsin/elastase inhibitor with porcine elastase.</title>
        <authorList>
            <person name="Huang K."/>
            <person name="Strynadka N.C."/>
            <person name="Bernard V.D."/>
            <person name="Peanasky R.J."/>
            <person name="James M.N."/>
        </authorList>
    </citation>
    <scope>X-RAY CRYSTALLOGRAPHY (2.4 ANGSTROMS) OF COMPLEX WITH ELASTASE</scope>
    <scope>DISULFIDE BONDS</scope>
</reference>
<accession>P07851</accession>
<accession>O77419</accession>
<sequence length="63" mass="6862">GQESCGPNEVWTECTGCEMKCGPDENTPCPLMCRRPSCECSPGRGMRRTNDGKCIPASQCPEH</sequence>
<dbReference type="EMBL" id="U94499">
    <property type="protein sequence ID" value="AAC61300.1"/>
    <property type="molecule type" value="mRNA"/>
</dbReference>
<dbReference type="PDB" id="1EAI">
    <property type="method" value="X-ray"/>
    <property type="resolution" value="2.40 A"/>
    <property type="chains" value="C/D=1-61"/>
</dbReference>
<dbReference type="PDBsum" id="1EAI"/>
<dbReference type="SMR" id="P07851"/>
<dbReference type="MEROPS" id="I08.001"/>
<dbReference type="EvolutionaryTrace" id="P07851"/>
<dbReference type="GO" id="GO:0005576">
    <property type="term" value="C:extracellular region"/>
    <property type="evidence" value="ECO:0007669"/>
    <property type="project" value="UniProtKB-SubCell"/>
</dbReference>
<dbReference type="GO" id="GO:0004867">
    <property type="term" value="F:serine-type endopeptidase inhibitor activity"/>
    <property type="evidence" value="ECO:0007669"/>
    <property type="project" value="UniProtKB-KW"/>
</dbReference>
<dbReference type="CDD" id="cd19941">
    <property type="entry name" value="TIL"/>
    <property type="match status" value="1"/>
</dbReference>
<dbReference type="Gene3D" id="2.10.25.10">
    <property type="entry name" value="Laminin"/>
    <property type="match status" value="1"/>
</dbReference>
<dbReference type="InterPro" id="IPR036084">
    <property type="entry name" value="Ser_inhib-like_sf"/>
</dbReference>
<dbReference type="InterPro" id="IPR002919">
    <property type="entry name" value="TIL_dom"/>
</dbReference>
<dbReference type="Pfam" id="PF01826">
    <property type="entry name" value="TIL"/>
    <property type="match status" value="1"/>
</dbReference>
<dbReference type="SUPFAM" id="SSF57567">
    <property type="entry name" value="Serine protease inhibitors"/>
    <property type="match status" value="1"/>
</dbReference>
<protein>
    <recommendedName>
        <fullName evidence="4">Chymotrypsin/elastase isoinhibitor 1</fullName>
    </recommendedName>
    <alternativeName>
        <fullName>AsC/E-1</fullName>
    </alternativeName>
    <alternativeName>
        <fullName>C/E-1 inhibitor</fullName>
    </alternativeName>
</protein>
<comment type="function">
    <text>Defends the organism against the host's proteinases.</text>
</comment>
<comment type="subcellular location">
    <subcellularLocation>
        <location evidence="2">Secreted</location>
    </subcellularLocation>
</comment>
<comment type="similarity">
    <text evidence="5">Belongs to the serine protease inhibitor-like (TIL domain-containing) family.</text>
</comment>
<feature type="chain" id="PRO_0000174329" description="Chymotrypsin/elastase isoinhibitor 1" evidence="2">
    <location>
        <begin position="1"/>
        <end position="63"/>
    </location>
</feature>
<feature type="domain" description="TIL" evidence="1">
    <location>
        <begin position="5"/>
        <end position="60"/>
    </location>
</feature>
<feature type="site" description="Reactive bond" evidence="6">
    <location>
        <begin position="31"/>
        <end position="32"/>
    </location>
</feature>
<feature type="disulfide bond" evidence="3 7">
    <location>
        <begin position="5"/>
        <end position="38"/>
    </location>
</feature>
<feature type="disulfide bond" evidence="3 7">
    <location>
        <begin position="14"/>
        <end position="33"/>
    </location>
</feature>
<feature type="disulfide bond" evidence="3 7">
    <location>
        <begin position="17"/>
        <end position="29"/>
    </location>
</feature>
<feature type="disulfide bond" evidence="3 7">
    <location>
        <begin position="21"/>
        <end position="60"/>
    </location>
</feature>
<feature type="disulfide bond" evidence="3 7">
    <location>
        <begin position="40"/>
        <end position="54"/>
    </location>
</feature>
<feature type="sequence conflict" description="In Ref. 2; AAC61300." evidence="5" ref="2">
    <original>S</original>
    <variation>R</variation>
    <location>
        <position position="4"/>
    </location>
</feature>
<feature type="sequence conflict" description="In Ref. 2; AAC61300." evidence="5" ref="2">
    <original>PD</original>
    <variation>DP</variation>
    <location>
        <begin position="23"/>
        <end position="24"/>
    </location>
</feature>
<feature type="strand" evidence="8">
    <location>
        <begin position="10"/>
        <end position="15"/>
    </location>
</feature>
<feature type="strand" evidence="8">
    <location>
        <begin position="20"/>
        <end position="22"/>
    </location>
</feature>
<feature type="strand" evidence="8">
    <location>
        <begin position="28"/>
        <end position="32"/>
    </location>
</feature>
<feature type="strand" evidence="8">
    <location>
        <begin position="37"/>
        <end position="39"/>
    </location>
</feature>
<feature type="helix" evidence="8">
    <location>
        <begin position="42"/>
        <end position="44"/>
    </location>
</feature>
<feature type="strand" evidence="8">
    <location>
        <begin position="46"/>
        <end position="48"/>
    </location>
</feature>
<feature type="strand" evidence="8">
    <location>
        <begin position="54"/>
        <end position="56"/>
    </location>
</feature>
<feature type="helix" evidence="8">
    <location>
        <begin position="57"/>
        <end position="59"/>
    </location>
</feature>
<keyword id="KW-0002">3D-structure</keyword>
<keyword id="KW-0903">Direct protein sequencing</keyword>
<keyword id="KW-1015">Disulfide bond</keyword>
<keyword id="KW-0646">Protease inhibitor</keyword>
<keyword id="KW-0964">Secreted</keyword>
<keyword id="KW-0722">Serine protease inhibitor</keyword>
<evidence type="ECO:0000255" key="1"/>
<evidence type="ECO:0000269" key="2">
    <source>
    </source>
</evidence>
<evidence type="ECO:0000269" key="3">
    <source>
    </source>
</evidence>
<evidence type="ECO:0000303" key="4">
    <source>
    </source>
</evidence>
<evidence type="ECO:0000305" key="5"/>
<evidence type="ECO:0000305" key="6">
    <source>
    </source>
</evidence>
<evidence type="ECO:0000312" key="7">
    <source>
        <dbReference type="PDB" id="1EAI"/>
    </source>
</evidence>
<evidence type="ECO:0007829" key="8">
    <source>
        <dbReference type="PDB" id="1EAI"/>
    </source>
</evidence>
<organism>
    <name type="scientific">Ascaris suum</name>
    <name type="common">Pig roundworm</name>
    <name type="synonym">Ascaris lumbricoides</name>
    <dbReference type="NCBI Taxonomy" id="6253"/>
    <lineage>
        <taxon>Eukaryota</taxon>
        <taxon>Metazoa</taxon>
        <taxon>Ecdysozoa</taxon>
        <taxon>Nematoda</taxon>
        <taxon>Chromadorea</taxon>
        <taxon>Rhabditida</taxon>
        <taxon>Spirurina</taxon>
        <taxon>Ascaridomorpha</taxon>
        <taxon>Ascaridoidea</taxon>
        <taxon>Ascarididae</taxon>
        <taxon>Ascaris</taxon>
    </lineage>
</organism>
<name>TIL1_ASCSU</name>